<reference key="1">
    <citation type="journal article" date="1988" name="Gene">
        <title>The Caenorhabditis elegans hsp70 gene family: a molecular genetic characterization.</title>
        <authorList>
            <person name="Snutch T.P."/>
            <person name="Heschl M.F.P."/>
            <person name="Baillie D.L."/>
        </authorList>
    </citation>
    <scope>NUCLEOTIDE SEQUENCE [GENOMIC DNA]</scope>
</reference>
<reference key="2">
    <citation type="journal article" date="1998" name="Science">
        <title>Genome sequence of the nematode C. elegans: a platform for investigating biology.</title>
        <authorList>
            <consortium name="The C. elegans sequencing consortium"/>
        </authorList>
    </citation>
    <scope>NUCLEOTIDE SEQUENCE [LARGE SCALE GENOMIC DNA]</scope>
    <source>
        <strain>Bristol N2</strain>
    </source>
</reference>
<reference key="3">
    <citation type="journal article" date="2004" name="Cell">
        <title>Regulation of the myosin-directed chaperone UNC-45 by a novel E3/E4-multiubiquitylation complex in C. elegans.</title>
        <authorList>
            <person name="Hoppe T."/>
            <person name="Cassata G."/>
            <person name="Barral J.M."/>
            <person name="Springer W."/>
            <person name="Hutagalung A.H."/>
            <person name="Epstein H.F."/>
            <person name="Baumeister R."/>
        </authorList>
    </citation>
    <scope>INTERACTION WITH CHN-1</scope>
</reference>
<reference key="4">
    <citation type="journal article" date="2016" name="PLoS Genet.">
        <title>The Caenorhabditis elegans protein FIC-1 is an AMPylase that covalently modifies heat-shock 70 family proteins, translation elongation factors and histones.</title>
        <authorList>
            <person name="Truttmann M.C."/>
            <person name="Cruz V.E."/>
            <person name="Guo X."/>
            <person name="Engert C."/>
            <person name="Schwartz T.U."/>
            <person name="Ploegh H.L."/>
        </authorList>
    </citation>
    <scope>AMPYLATION</scope>
    <scope>IDENTIFICATION BY MASS SPECTROMETRY</scope>
</reference>
<reference key="5">
    <citation type="journal article" date="2018" name="Nat. Commun.">
        <title>Visible light reduces C. elegans longevity.</title>
        <authorList>
            <person name="De Magalhaes Filho C.D."/>
            <person name="Henriquez B."/>
            <person name="Seah N.E."/>
            <person name="Evans R.M."/>
            <person name="Lapierre L.R."/>
            <person name="Dillin A."/>
        </authorList>
    </citation>
    <scope>INDUCTION</scope>
</reference>
<protein>
    <recommendedName>
        <fullName evidence="6">Heat shock protein hsp-1</fullName>
    </recommendedName>
    <alternativeName>
        <fullName evidence="5">Heat shock 70 kDa protein A</fullName>
    </alternativeName>
</protein>
<gene>
    <name evidence="7" type="primary">hsp-1</name>
    <name evidence="5" type="synonym">hsp70a</name>
    <name evidence="7" type="ORF">F26D10.3</name>
</gene>
<feature type="chain" id="PRO_0000078298" description="Heat shock protein hsp-1">
    <location>
        <begin position="1"/>
        <end position="640"/>
    </location>
</feature>
<feature type="region of interest" description="Disordered" evidence="1">
    <location>
        <begin position="613"/>
        <end position="640"/>
    </location>
</feature>
<feature type="compositionally biased region" description="Gly residues" evidence="1">
    <location>
        <begin position="623"/>
        <end position="633"/>
    </location>
</feature>
<feature type="sequence conflict" description="In Ref. 1; AAA28078." evidence="6" ref="1">
    <original>E</original>
    <variation>K</variation>
    <location>
        <position position="130"/>
    </location>
</feature>
<feature type="sequence conflict" description="In Ref. 1; AAA28078." evidence="6" ref="1">
    <original>GT</original>
    <variation>EP</variation>
    <location>
        <begin position="137"/>
        <end position="138"/>
    </location>
</feature>
<feature type="sequence conflict" description="In Ref. 1; AAA28078." evidence="6" ref="1">
    <original>A</original>
    <variation>T</variation>
    <location>
        <position position="149"/>
    </location>
</feature>
<feature type="sequence conflict" description="In Ref. 1; AAA28078." evidence="6" ref="1">
    <original>KR</original>
    <variation>NE</variation>
    <location>
        <begin position="272"/>
        <end position="273"/>
    </location>
</feature>
<feature type="sequence conflict" description="In Ref. 1; AAA28078." evidence="6" ref="1">
    <original>S</original>
    <variation>C</variation>
    <location>
        <position position="279"/>
    </location>
</feature>
<feature type="sequence conflict" description="In Ref. 1; AAA28078." evidence="6" ref="1">
    <original>V</original>
    <variation>L</variation>
    <location>
        <position position="370"/>
    </location>
</feature>
<feature type="sequence conflict" description="In Ref. 1; AAA28078." evidence="6" ref="1">
    <original>QNK</original>
    <variation>AKQ</variation>
    <location>
        <begin position="499"/>
        <end position="501"/>
    </location>
</feature>
<feature type="sequence conflict" description="In Ref. 1; AAA28078." evidence="6" ref="1">
    <original>GRL</original>
    <variation>DRF</variation>
    <location>
        <begin position="509"/>
        <end position="511"/>
    </location>
</feature>
<feature type="sequence conflict" description="In Ref. 1; AAA28078." evidence="6" ref="1">
    <original>H</original>
    <variation>S</variation>
    <location>
        <position position="595"/>
    </location>
</feature>
<feature type="sequence conflict" description="In Ref. 1; AAA28078." evidence="6" ref="1">
    <original>NPII</original>
    <variation>KPDL</variation>
    <location>
        <begin position="605"/>
        <end position="608"/>
    </location>
</feature>
<feature type="helix" evidence="8">
    <location>
        <begin position="542"/>
        <end position="554"/>
    </location>
</feature>
<feature type="turn" evidence="8">
    <location>
        <begin position="557"/>
        <end position="559"/>
    </location>
</feature>
<feature type="helix" evidence="8">
    <location>
        <begin position="560"/>
        <end position="562"/>
    </location>
</feature>
<feature type="helix" evidence="8">
    <location>
        <begin position="565"/>
        <end position="585"/>
    </location>
</feature>
<feature type="helix" evidence="8">
    <location>
        <begin position="590"/>
        <end position="611"/>
    </location>
</feature>
<keyword id="KW-0002">3D-structure</keyword>
<keyword id="KW-0067">ATP-binding</keyword>
<keyword id="KW-0547">Nucleotide-binding</keyword>
<keyword id="KW-1185">Reference proteome</keyword>
<keyword id="KW-0346">Stress response</keyword>
<proteinExistence type="evidence at protein level"/>
<dbReference type="EMBL" id="M18540">
    <property type="protein sequence ID" value="AAA28078.1"/>
    <property type="molecule type" value="Genomic_DNA"/>
</dbReference>
<dbReference type="EMBL" id="BX284604">
    <property type="protein sequence ID" value="CAB02319.1"/>
    <property type="molecule type" value="Genomic_DNA"/>
</dbReference>
<dbReference type="PIR" id="JT0285">
    <property type="entry name" value="HHKW7A"/>
</dbReference>
<dbReference type="PIR" id="T21394">
    <property type="entry name" value="T21394"/>
</dbReference>
<dbReference type="RefSeq" id="NP_503068.1">
    <property type="nucleotide sequence ID" value="NM_070667.7"/>
</dbReference>
<dbReference type="PDB" id="2P32">
    <property type="method" value="X-ray"/>
    <property type="resolution" value="3.20 A"/>
    <property type="chains" value="A/B/C/D/E/F=542-640"/>
</dbReference>
<dbReference type="PDB" id="4I2W">
    <property type="method" value="X-ray"/>
    <property type="resolution" value="3.60 A"/>
    <property type="chains" value="B=631-640"/>
</dbReference>
<dbReference type="PDBsum" id="2P32"/>
<dbReference type="PDBsum" id="4I2W"/>
<dbReference type="SMR" id="P09446"/>
<dbReference type="BioGRID" id="43583">
    <property type="interactions" value="89"/>
</dbReference>
<dbReference type="DIP" id="DIP-26882N"/>
<dbReference type="FunCoup" id="P09446">
    <property type="interactions" value="1555"/>
</dbReference>
<dbReference type="IntAct" id="P09446">
    <property type="interactions" value="8"/>
</dbReference>
<dbReference type="MINT" id="P09446"/>
<dbReference type="STRING" id="6239.F26D10.3.1"/>
<dbReference type="iPTMnet" id="P09446"/>
<dbReference type="PaxDb" id="6239-F26D10.3.1"/>
<dbReference type="PeptideAtlas" id="P09446"/>
<dbReference type="EnsemblMetazoa" id="F26D10.3.1">
    <property type="protein sequence ID" value="F26D10.3.1"/>
    <property type="gene ID" value="WBGene00002005"/>
</dbReference>
<dbReference type="GeneID" id="178507"/>
<dbReference type="KEGG" id="cel:CELE_F26D10.3"/>
<dbReference type="UCSC" id="F26D10.3.1">
    <property type="organism name" value="c. elegans"/>
</dbReference>
<dbReference type="AGR" id="WB:WBGene00002005"/>
<dbReference type="CTD" id="178507"/>
<dbReference type="WormBase" id="F26D10.3">
    <property type="protein sequence ID" value="CE09682"/>
    <property type="gene ID" value="WBGene00002005"/>
    <property type="gene designation" value="hsp-1"/>
</dbReference>
<dbReference type="eggNOG" id="KOG0101">
    <property type="taxonomic scope" value="Eukaryota"/>
</dbReference>
<dbReference type="GeneTree" id="ENSGT00940000154813"/>
<dbReference type="HOGENOM" id="CLU_005965_3_0_1"/>
<dbReference type="InParanoid" id="P09446"/>
<dbReference type="OMA" id="AYTKNQD"/>
<dbReference type="OrthoDB" id="2401965at2759"/>
<dbReference type="PhylomeDB" id="P09446"/>
<dbReference type="Reactome" id="R-CEL-3371453">
    <property type="pathway name" value="Regulation of HSF1-mediated heat shock response"/>
</dbReference>
<dbReference type="Reactome" id="R-CEL-3371497">
    <property type="pathway name" value="HSP90 chaperone cycle for steroid hormone receptors (SHR) in the presence of ligand"/>
</dbReference>
<dbReference type="Reactome" id="R-CEL-3371571">
    <property type="pathway name" value="HSF1-dependent transactivation"/>
</dbReference>
<dbReference type="Reactome" id="R-CEL-6798695">
    <property type="pathway name" value="Neutrophil degranulation"/>
</dbReference>
<dbReference type="Reactome" id="R-CEL-72163">
    <property type="pathway name" value="mRNA Splicing - Major Pathway"/>
</dbReference>
<dbReference type="Reactome" id="R-CEL-8856828">
    <property type="pathway name" value="Clathrin-mediated endocytosis"/>
</dbReference>
<dbReference type="Reactome" id="R-CEL-888590">
    <property type="pathway name" value="GABA synthesis, release, reuptake and degradation"/>
</dbReference>
<dbReference type="EvolutionaryTrace" id="P09446"/>
<dbReference type="PRO" id="PR:P09446"/>
<dbReference type="Proteomes" id="UP000001940">
    <property type="component" value="Chromosome IV"/>
</dbReference>
<dbReference type="Bgee" id="WBGene00002005">
    <property type="expression patterns" value="Expressed in adult organism and 5 other cell types or tissues"/>
</dbReference>
<dbReference type="GO" id="GO:0005737">
    <property type="term" value="C:cytoplasm"/>
    <property type="evidence" value="ECO:0000314"/>
    <property type="project" value="WormBase"/>
</dbReference>
<dbReference type="GO" id="GO:0005829">
    <property type="term" value="C:cytosol"/>
    <property type="evidence" value="ECO:0000314"/>
    <property type="project" value="WormBase"/>
</dbReference>
<dbReference type="GO" id="GO:0005634">
    <property type="term" value="C:nucleus"/>
    <property type="evidence" value="ECO:0000314"/>
    <property type="project" value="WormBase"/>
</dbReference>
<dbReference type="GO" id="GO:0005886">
    <property type="term" value="C:plasma membrane"/>
    <property type="evidence" value="ECO:0000318"/>
    <property type="project" value="GO_Central"/>
</dbReference>
<dbReference type="GO" id="GO:0005524">
    <property type="term" value="F:ATP binding"/>
    <property type="evidence" value="ECO:0007669"/>
    <property type="project" value="UniProtKB-KW"/>
</dbReference>
<dbReference type="GO" id="GO:0016887">
    <property type="term" value="F:ATP hydrolysis activity"/>
    <property type="evidence" value="ECO:0000314"/>
    <property type="project" value="WormBase"/>
</dbReference>
<dbReference type="GO" id="GO:0140662">
    <property type="term" value="F:ATP-dependent protein folding chaperone"/>
    <property type="evidence" value="ECO:0007669"/>
    <property type="project" value="InterPro"/>
</dbReference>
<dbReference type="GO" id="GO:0031072">
    <property type="term" value="F:heat shock protein binding"/>
    <property type="evidence" value="ECO:0000318"/>
    <property type="project" value="GO_Central"/>
</dbReference>
<dbReference type="GO" id="GO:0044183">
    <property type="term" value="F:protein folding chaperone"/>
    <property type="evidence" value="ECO:0000318"/>
    <property type="project" value="GO_Central"/>
</dbReference>
<dbReference type="GO" id="GO:0051085">
    <property type="term" value="P:chaperone cofactor-dependent protein refolding"/>
    <property type="evidence" value="ECO:0000318"/>
    <property type="project" value="GO_Central"/>
</dbReference>
<dbReference type="GO" id="GO:0008340">
    <property type="term" value="P:determination of adult lifespan"/>
    <property type="evidence" value="ECO:0000315"/>
    <property type="project" value="WormBase"/>
</dbReference>
<dbReference type="GO" id="GO:0042026">
    <property type="term" value="P:protein refolding"/>
    <property type="evidence" value="ECO:0000318"/>
    <property type="project" value="GO_Central"/>
</dbReference>
<dbReference type="GO" id="GO:0009408">
    <property type="term" value="P:response to heat"/>
    <property type="evidence" value="ECO:0000314"/>
    <property type="project" value="WormBase"/>
</dbReference>
<dbReference type="GO" id="GO:0042147">
    <property type="term" value="P:retrograde transport, endosome to Golgi"/>
    <property type="evidence" value="ECO:0000315"/>
    <property type="project" value="WormBase"/>
</dbReference>
<dbReference type="CDD" id="cd10233">
    <property type="entry name" value="ASKHA_NBD_HSP70_HSPA1"/>
    <property type="match status" value="1"/>
</dbReference>
<dbReference type="DisProt" id="DP02984"/>
<dbReference type="FunFam" id="2.60.34.10:FF:000002">
    <property type="entry name" value="Heat shock 70 kDa"/>
    <property type="match status" value="1"/>
</dbReference>
<dbReference type="FunFam" id="3.30.420.40:FF:000172">
    <property type="entry name" value="Heat shock 70 kDa protein"/>
    <property type="match status" value="2"/>
</dbReference>
<dbReference type="FunFam" id="3.30.30.30:FF:000001">
    <property type="entry name" value="heat shock 70 kDa protein-like"/>
    <property type="match status" value="1"/>
</dbReference>
<dbReference type="FunFam" id="3.30.420.40:FF:000028">
    <property type="entry name" value="heat shock 70 kDa protein-like"/>
    <property type="match status" value="1"/>
</dbReference>
<dbReference type="FunFam" id="3.90.640.10:FF:000134">
    <property type="entry name" value="Heat shock cognate 71 kDa protein"/>
    <property type="match status" value="1"/>
</dbReference>
<dbReference type="FunFam" id="1.20.1270.10:FF:000003">
    <property type="entry name" value="heat shock cognate 71 kDa protein-like"/>
    <property type="match status" value="1"/>
</dbReference>
<dbReference type="FunFam" id="3.30.420.40:FF:000026">
    <property type="entry name" value="Heat shock protein 70"/>
    <property type="match status" value="1"/>
</dbReference>
<dbReference type="Gene3D" id="1.20.1270.10">
    <property type="match status" value="1"/>
</dbReference>
<dbReference type="Gene3D" id="3.30.30.30">
    <property type="match status" value="1"/>
</dbReference>
<dbReference type="Gene3D" id="3.30.420.40">
    <property type="match status" value="2"/>
</dbReference>
<dbReference type="Gene3D" id="3.90.640.10">
    <property type="entry name" value="Actin, Chain A, domain 4"/>
    <property type="match status" value="1"/>
</dbReference>
<dbReference type="Gene3D" id="2.60.34.10">
    <property type="entry name" value="Substrate Binding Domain Of DNAk, Chain A, domain 1"/>
    <property type="match status" value="1"/>
</dbReference>
<dbReference type="InterPro" id="IPR043129">
    <property type="entry name" value="ATPase_NBD"/>
</dbReference>
<dbReference type="InterPro" id="IPR018181">
    <property type="entry name" value="Heat_shock_70_CS"/>
</dbReference>
<dbReference type="InterPro" id="IPR029048">
    <property type="entry name" value="HSP70_C_sf"/>
</dbReference>
<dbReference type="InterPro" id="IPR029047">
    <property type="entry name" value="HSP70_peptide-bd_sf"/>
</dbReference>
<dbReference type="InterPro" id="IPR013126">
    <property type="entry name" value="Hsp_70_fam"/>
</dbReference>
<dbReference type="NCBIfam" id="NF001413">
    <property type="entry name" value="PRK00290.1"/>
    <property type="match status" value="1"/>
</dbReference>
<dbReference type="PANTHER" id="PTHR19375">
    <property type="entry name" value="HEAT SHOCK PROTEIN 70KDA"/>
    <property type="match status" value="1"/>
</dbReference>
<dbReference type="Pfam" id="PF00012">
    <property type="entry name" value="HSP70"/>
    <property type="match status" value="1"/>
</dbReference>
<dbReference type="PRINTS" id="PR00301">
    <property type="entry name" value="HEATSHOCK70"/>
</dbReference>
<dbReference type="SUPFAM" id="SSF53067">
    <property type="entry name" value="Actin-like ATPase domain"/>
    <property type="match status" value="2"/>
</dbReference>
<dbReference type="SUPFAM" id="SSF100934">
    <property type="entry name" value="Heat shock protein 70kD (HSP70), C-terminal subdomain"/>
    <property type="match status" value="1"/>
</dbReference>
<dbReference type="SUPFAM" id="SSF100920">
    <property type="entry name" value="Heat shock protein 70kD (HSP70), peptide-binding domain"/>
    <property type="match status" value="1"/>
</dbReference>
<dbReference type="PROSITE" id="PS00297">
    <property type="entry name" value="HSP70_1"/>
    <property type="match status" value="1"/>
</dbReference>
<dbReference type="PROSITE" id="PS00329">
    <property type="entry name" value="HSP70_2"/>
    <property type="match status" value="1"/>
</dbReference>
<dbReference type="PROSITE" id="PS01036">
    <property type="entry name" value="HSP70_3"/>
    <property type="match status" value="1"/>
</dbReference>
<name>HSP1_CAEEL</name>
<accession>P09446</accession>
<accession>Q93601</accession>
<organism>
    <name type="scientific">Caenorhabditis elegans</name>
    <dbReference type="NCBI Taxonomy" id="6239"/>
    <lineage>
        <taxon>Eukaryota</taxon>
        <taxon>Metazoa</taxon>
        <taxon>Ecdysozoa</taxon>
        <taxon>Nematoda</taxon>
        <taxon>Chromadorea</taxon>
        <taxon>Rhabditida</taxon>
        <taxon>Rhabditina</taxon>
        <taxon>Rhabditomorpha</taxon>
        <taxon>Rhabditoidea</taxon>
        <taxon>Rhabditidae</taxon>
        <taxon>Peloderinae</taxon>
        <taxon>Caenorhabditis</taxon>
    </lineage>
</organism>
<sequence>MSKHNAVGIDLGTTYSCVGVFMHGKVEIIANDQGNRTTPSYVAFTDTERLIGDAAKNQVAMNPHNTVFDAKRLIGRKFDDPAVQSDMKHWPFKVISAEGAKPKVQVEYKGENKIFTPEEISSMVLLKMKETAEAFLGTTVKDAVVTVPAYFNDSQRQATKDAGAIAGLNVLRIINEPTAAAIAYGLDKKGHGERNVLIFDLGGGTFDVSILTIEDGIFEVKSTAGDTHLGGEDFDNRMVNHFCAEFKRKHKKDLASNPRALRRLRTACERAKRTLSSSSQASIEIDSLFEGIDFYTNITRARFEELCADLFRSTMDPVEKSLRDAKMDKSQVHDIVLVGGSTRIPKVQKLLSDLFSGKELNKSINPDEAVAYGAAVQAAILSGDKSEAVQDLLLLDVAPLSLGIETAGGVMTALIKRNTTIPTKTAQTFTTYSDNQPGVLIQVYEGERAMTKDNNLLGKFELSGIPPAPRGVPQIEVTFDIDANGILNVSATDKSTGKQNKITITNDKGRLSKDDIERMVNEAEKYKADDEAQKDRIGAKNGLESYAFNLKQTIEDEKLKDKISPEDKKKIEDKCDEILKWLDSNQTAEKEEFEHQQKDLEGLANPIISKLYQSAGGAPPGAAPGGAAGGAGGPTIEEVD</sequence>
<comment type="subunit">
    <text evidence="2">Interacts with E3 ubiquitin-protein ligase chn-1.</text>
</comment>
<comment type="interaction">
    <interactant intactId="EBI-322448">
        <id>P09446</id>
    </interactant>
    <interactant intactId="EBI-6514174">
        <id>O16259</id>
        <label>sti-1</label>
    </interactant>
    <organismsDiffer>false</organismsDiffer>
    <experiments>3</experiments>
</comment>
<comment type="interaction">
    <interactant intactId="EBI-322448">
        <id>P09446</id>
    </interactant>
    <interactant intactId="EBI-6675165">
        <id>G5EG62</id>
        <label>unc-45</label>
    </interactant>
    <organismsDiffer>false</organismsDiffer>
    <experiments>3</experiments>
</comment>
<comment type="induction">
    <text evidence="4">Induced by white light exposure.</text>
</comment>
<comment type="PTM">
    <text evidence="3">AMPylated by fic-1.</text>
</comment>
<comment type="similarity">
    <text evidence="6">Belongs to the heat shock protein 70 family.</text>
</comment>
<evidence type="ECO:0000256" key="1">
    <source>
        <dbReference type="SAM" id="MobiDB-lite"/>
    </source>
</evidence>
<evidence type="ECO:0000269" key="2">
    <source>
    </source>
</evidence>
<evidence type="ECO:0000269" key="3">
    <source>
    </source>
</evidence>
<evidence type="ECO:0000269" key="4">
    <source>
    </source>
</evidence>
<evidence type="ECO:0000303" key="5">
    <source>
    </source>
</evidence>
<evidence type="ECO:0000305" key="6"/>
<evidence type="ECO:0000312" key="7">
    <source>
        <dbReference type="WormBase" id="F26D10.3"/>
    </source>
</evidence>
<evidence type="ECO:0007829" key="8">
    <source>
        <dbReference type="PDB" id="2P32"/>
    </source>
</evidence>